<keyword id="KW-0472">Membrane</keyword>
<keyword id="KW-0520">NAD</keyword>
<keyword id="KW-0521">NADP</keyword>
<keyword id="KW-0618">Plastoquinone</keyword>
<keyword id="KW-0874">Quinone</keyword>
<keyword id="KW-1185">Reference proteome</keyword>
<keyword id="KW-0793">Thylakoid</keyword>
<keyword id="KW-1278">Translocase</keyword>
<keyword id="KW-0813">Transport</keyword>
<comment type="function">
    <text evidence="1">NDH-1 shuttles electrons from an unknown electron donor, via FMN and iron-sulfur (Fe-S) centers, to quinones in the respiratory and/or the photosynthetic chain. The immediate electron acceptor for the enzyme in this species is believed to be plastoquinone. Couples the redox reaction to proton translocation, and thus conserves the redox energy in a proton gradient. Cyanobacterial NDH-1 also plays a role in inorganic carbon-concentration.</text>
</comment>
<comment type="catalytic activity">
    <reaction evidence="1">
        <text>a plastoquinone + NADH + (n+1) H(+)(in) = a plastoquinol + NAD(+) + n H(+)(out)</text>
        <dbReference type="Rhea" id="RHEA:42608"/>
        <dbReference type="Rhea" id="RHEA-COMP:9561"/>
        <dbReference type="Rhea" id="RHEA-COMP:9562"/>
        <dbReference type="ChEBI" id="CHEBI:15378"/>
        <dbReference type="ChEBI" id="CHEBI:17757"/>
        <dbReference type="ChEBI" id="CHEBI:57540"/>
        <dbReference type="ChEBI" id="CHEBI:57945"/>
        <dbReference type="ChEBI" id="CHEBI:62192"/>
    </reaction>
</comment>
<comment type="catalytic activity">
    <reaction evidence="1">
        <text>a plastoquinone + NADPH + (n+1) H(+)(in) = a plastoquinol + NADP(+) + n H(+)(out)</text>
        <dbReference type="Rhea" id="RHEA:42612"/>
        <dbReference type="Rhea" id="RHEA-COMP:9561"/>
        <dbReference type="Rhea" id="RHEA-COMP:9562"/>
        <dbReference type="ChEBI" id="CHEBI:15378"/>
        <dbReference type="ChEBI" id="CHEBI:17757"/>
        <dbReference type="ChEBI" id="CHEBI:57783"/>
        <dbReference type="ChEBI" id="CHEBI:58349"/>
        <dbReference type="ChEBI" id="CHEBI:62192"/>
    </reaction>
</comment>
<comment type="subunit">
    <text evidence="1">NDH-1 can be composed of about 15 different subunits; different subcomplexes with different compositions have been identified which probably have different functions.</text>
</comment>
<comment type="subcellular location">
    <subcellularLocation>
        <location evidence="1">Cellular thylakoid membrane</location>
        <topology evidence="1">Peripheral membrane protein</topology>
        <orientation evidence="1">Cytoplasmic side</orientation>
    </subcellularLocation>
</comment>
<comment type="similarity">
    <text evidence="1">Belongs to the complex I NdhN subunit family.</text>
</comment>
<evidence type="ECO:0000255" key="1">
    <source>
        <dbReference type="HAMAP-Rule" id="MF_01353"/>
    </source>
</evidence>
<sequence length="153" mass="16767">MPLLLSGRGFRRELESAGCMAVFAPLEGGAETRLLRRLRGAGYRTQLSSARGLGDPEVFLFQKHGIRPPHLGHQSVGRGAAVGEVQEVMPLLGESMLGTKPVVLWLLEGQVLSRSELSALCDLCRREPRLKVVVEMGGARSLRWQPLKELLSN</sequence>
<accession>Q0ID04</accession>
<dbReference type="EC" id="7.1.1.-" evidence="1"/>
<dbReference type="EMBL" id="CP000435">
    <property type="protein sequence ID" value="ABI47819.1"/>
    <property type="molecule type" value="Genomic_DNA"/>
</dbReference>
<dbReference type="RefSeq" id="WP_011618400.1">
    <property type="nucleotide sequence ID" value="NC_008319.1"/>
</dbReference>
<dbReference type="SMR" id="Q0ID04"/>
<dbReference type="STRING" id="64471.sync_0438"/>
<dbReference type="KEGG" id="syg:sync_0438"/>
<dbReference type="eggNOG" id="ENOG502ZBMI">
    <property type="taxonomic scope" value="Bacteria"/>
</dbReference>
<dbReference type="HOGENOM" id="CLU_087432_0_0_3"/>
<dbReference type="OrthoDB" id="510798at2"/>
<dbReference type="Proteomes" id="UP000001961">
    <property type="component" value="Chromosome"/>
</dbReference>
<dbReference type="GO" id="GO:0031676">
    <property type="term" value="C:plasma membrane-derived thylakoid membrane"/>
    <property type="evidence" value="ECO:0007669"/>
    <property type="project" value="UniProtKB-SubCell"/>
</dbReference>
<dbReference type="GO" id="GO:0016655">
    <property type="term" value="F:oxidoreductase activity, acting on NAD(P)H, quinone or similar compound as acceptor"/>
    <property type="evidence" value="ECO:0007669"/>
    <property type="project" value="UniProtKB-UniRule"/>
</dbReference>
<dbReference type="GO" id="GO:0048038">
    <property type="term" value="F:quinone binding"/>
    <property type="evidence" value="ECO:0007669"/>
    <property type="project" value="UniProtKB-KW"/>
</dbReference>
<dbReference type="HAMAP" id="MF_01353">
    <property type="entry name" value="NDH1_NDH1N"/>
    <property type="match status" value="1"/>
</dbReference>
<dbReference type="InterPro" id="IPR020874">
    <property type="entry name" value="NAD(P)H-quinone_OxRdtase_su_N"/>
</dbReference>
<dbReference type="PANTHER" id="PTHR35515">
    <property type="entry name" value="NAD(P)H-QUINONE OXIDOREDUCTASE SUBUNIT N, CHLOROPLASTIC"/>
    <property type="match status" value="1"/>
</dbReference>
<dbReference type="PANTHER" id="PTHR35515:SF1">
    <property type="entry name" value="NAD(P)H-QUINONE OXIDOREDUCTASE SUBUNIT N, CHLOROPLASTIC"/>
    <property type="match status" value="1"/>
</dbReference>
<dbReference type="Pfam" id="PF11909">
    <property type="entry name" value="NdhN"/>
    <property type="match status" value="1"/>
</dbReference>
<feature type="chain" id="PRO_0000352235" description="NAD(P)H-quinone oxidoreductase subunit N">
    <location>
        <begin position="1"/>
        <end position="153"/>
    </location>
</feature>
<proteinExistence type="inferred from homology"/>
<gene>
    <name evidence="1" type="primary">ndhN</name>
    <name type="ordered locus">sync_0438</name>
</gene>
<reference key="1">
    <citation type="journal article" date="2006" name="Proc. Natl. Acad. Sci. U.S.A.">
        <title>Genome sequence of Synechococcus CC9311: insights into adaptation to a coastal environment.</title>
        <authorList>
            <person name="Palenik B."/>
            <person name="Ren Q."/>
            <person name="Dupont C.L."/>
            <person name="Myers G.S."/>
            <person name="Heidelberg J.F."/>
            <person name="Badger J.H."/>
            <person name="Madupu R."/>
            <person name="Nelson W.C."/>
            <person name="Brinkac L.M."/>
            <person name="Dodson R.J."/>
            <person name="Durkin A.S."/>
            <person name="Daugherty S.C."/>
            <person name="Sullivan S.A."/>
            <person name="Khouri H."/>
            <person name="Mohamoud Y."/>
            <person name="Halpin R."/>
            <person name="Paulsen I.T."/>
        </authorList>
    </citation>
    <scope>NUCLEOTIDE SEQUENCE [LARGE SCALE GENOMIC DNA]</scope>
    <source>
        <strain>CC9311</strain>
    </source>
</reference>
<protein>
    <recommendedName>
        <fullName evidence="1">NAD(P)H-quinone oxidoreductase subunit N</fullName>
        <ecNumber evidence="1">7.1.1.-</ecNumber>
    </recommendedName>
    <alternativeName>
        <fullName evidence="1">NAD(P)H dehydrogenase I subunit N</fullName>
        <shortName evidence="1">NDH-1 subunit N</shortName>
        <shortName evidence="1">NDH-N</shortName>
    </alternativeName>
</protein>
<organism>
    <name type="scientific">Synechococcus sp. (strain CC9311)</name>
    <dbReference type="NCBI Taxonomy" id="64471"/>
    <lineage>
        <taxon>Bacteria</taxon>
        <taxon>Bacillati</taxon>
        <taxon>Cyanobacteriota</taxon>
        <taxon>Cyanophyceae</taxon>
        <taxon>Synechococcales</taxon>
        <taxon>Synechococcaceae</taxon>
        <taxon>Synechococcus</taxon>
    </lineage>
</organism>
<name>NDHN_SYNS3</name>